<dbReference type="EC" id="2.5.1.75" evidence="1"/>
<dbReference type="EMBL" id="CP000471">
    <property type="protein sequence ID" value="ABK42803.1"/>
    <property type="molecule type" value="Genomic_DNA"/>
</dbReference>
<dbReference type="RefSeq" id="WP_011711975.1">
    <property type="nucleotide sequence ID" value="NC_008576.1"/>
</dbReference>
<dbReference type="SMR" id="A0L4B0"/>
<dbReference type="STRING" id="156889.Mmc1_0276"/>
<dbReference type="KEGG" id="mgm:Mmc1_0276"/>
<dbReference type="eggNOG" id="COG0324">
    <property type="taxonomic scope" value="Bacteria"/>
</dbReference>
<dbReference type="HOGENOM" id="CLU_032616_0_1_5"/>
<dbReference type="OrthoDB" id="9776390at2"/>
<dbReference type="Proteomes" id="UP000002586">
    <property type="component" value="Chromosome"/>
</dbReference>
<dbReference type="GO" id="GO:0005524">
    <property type="term" value="F:ATP binding"/>
    <property type="evidence" value="ECO:0007669"/>
    <property type="project" value="UniProtKB-UniRule"/>
</dbReference>
<dbReference type="GO" id="GO:0052381">
    <property type="term" value="F:tRNA dimethylallyltransferase activity"/>
    <property type="evidence" value="ECO:0007669"/>
    <property type="project" value="UniProtKB-UniRule"/>
</dbReference>
<dbReference type="GO" id="GO:0006400">
    <property type="term" value="P:tRNA modification"/>
    <property type="evidence" value="ECO:0007669"/>
    <property type="project" value="TreeGrafter"/>
</dbReference>
<dbReference type="Gene3D" id="1.10.20.140">
    <property type="match status" value="1"/>
</dbReference>
<dbReference type="Gene3D" id="3.40.50.300">
    <property type="entry name" value="P-loop containing nucleotide triphosphate hydrolases"/>
    <property type="match status" value="1"/>
</dbReference>
<dbReference type="HAMAP" id="MF_00185">
    <property type="entry name" value="IPP_trans"/>
    <property type="match status" value="1"/>
</dbReference>
<dbReference type="InterPro" id="IPR039657">
    <property type="entry name" value="Dimethylallyltransferase"/>
</dbReference>
<dbReference type="InterPro" id="IPR018022">
    <property type="entry name" value="IPT"/>
</dbReference>
<dbReference type="InterPro" id="IPR027417">
    <property type="entry name" value="P-loop_NTPase"/>
</dbReference>
<dbReference type="NCBIfam" id="TIGR00174">
    <property type="entry name" value="miaA"/>
    <property type="match status" value="1"/>
</dbReference>
<dbReference type="PANTHER" id="PTHR11088">
    <property type="entry name" value="TRNA DIMETHYLALLYLTRANSFERASE"/>
    <property type="match status" value="1"/>
</dbReference>
<dbReference type="PANTHER" id="PTHR11088:SF60">
    <property type="entry name" value="TRNA DIMETHYLALLYLTRANSFERASE"/>
    <property type="match status" value="1"/>
</dbReference>
<dbReference type="Pfam" id="PF01715">
    <property type="entry name" value="IPPT"/>
    <property type="match status" value="1"/>
</dbReference>
<dbReference type="SUPFAM" id="SSF52540">
    <property type="entry name" value="P-loop containing nucleoside triphosphate hydrolases"/>
    <property type="match status" value="2"/>
</dbReference>
<gene>
    <name evidence="1" type="primary">miaA</name>
    <name type="ordered locus">Mmc1_0276</name>
</gene>
<proteinExistence type="inferred from homology"/>
<organism>
    <name type="scientific">Magnetococcus marinus (strain ATCC BAA-1437 / JCM 17883 / MC-1)</name>
    <dbReference type="NCBI Taxonomy" id="156889"/>
    <lineage>
        <taxon>Bacteria</taxon>
        <taxon>Pseudomonadati</taxon>
        <taxon>Pseudomonadota</taxon>
        <taxon>Alphaproteobacteria</taxon>
        <taxon>Magnetococcales</taxon>
        <taxon>Magnetococcaceae</taxon>
        <taxon>Magnetococcus</taxon>
    </lineage>
</organism>
<sequence length="306" mass="34185">MGPTASGKTGLALHLAEHFPLEIVNADSVQVYRGMDIGSAKPTLQERQAIVHHLIDVTTPDDPFSAGRFRTAALEVIEDCHRRGVIPALVGGTGFYFRAVEQGIAEIPEVDAQIVAELNRRVCDEVGLACCYAQLQQVDPPWAARVEPGDRQRIVRGLSVYLASGQPLSYWQQLSCQQAPEGPALRICKLAIEWPREQLYARINQRFEQMLKEGFMEEVQGLLSRGYHGDLPAMRAVGYRALIGYLQGAYDLARAVELGQRDSRRYAKRQITWLKAEPGLQWLAPEGAKQAALDEVRAFLQFFKKK</sequence>
<evidence type="ECO:0000255" key="1">
    <source>
        <dbReference type="HAMAP-Rule" id="MF_00185"/>
    </source>
</evidence>
<keyword id="KW-0067">ATP-binding</keyword>
<keyword id="KW-0460">Magnesium</keyword>
<keyword id="KW-0547">Nucleotide-binding</keyword>
<keyword id="KW-1185">Reference proteome</keyword>
<keyword id="KW-0808">Transferase</keyword>
<keyword id="KW-0819">tRNA processing</keyword>
<name>MIAA_MAGMM</name>
<accession>A0L4B0</accession>
<reference key="1">
    <citation type="journal article" date="2009" name="Appl. Environ. Microbiol.">
        <title>Complete genome sequence of the chemolithoautotrophic marine magnetotactic coccus strain MC-1.</title>
        <authorList>
            <person name="Schubbe S."/>
            <person name="Williams T.J."/>
            <person name="Xie G."/>
            <person name="Kiss H.E."/>
            <person name="Brettin T.S."/>
            <person name="Martinez D."/>
            <person name="Ross C.A."/>
            <person name="Schuler D."/>
            <person name="Cox B.L."/>
            <person name="Nealson K.H."/>
            <person name="Bazylinski D.A."/>
        </authorList>
    </citation>
    <scope>NUCLEOTIDE SEQUENCE [LARGE SCALE GENOMIC DNA]</scope>
    <source>
        <strain>ATCC BAA-1437 / JCM 17883 / MC-1</strain>
    </source>
</reference>
<protein>
    <recommendedName>
        <fullName evidence="1">tRNA dimethylallyltransferase</fullName>
        <ecNumber evidence="1">2.5.1.75</ecNumber>
    </recommendedName>
    <alternativeName>
        <fullName evidence="1">Dimethylallyl diphosphate:tRNA dimethylallyltransferase</fullName>
        <shortName evidence="1">DMAPP:tRNA dimethylallyltransferase</shortName>
        <shortName evidence="1">DMATase</shortName>
    </alternativeName>
    <alternativeName>
        <fullName evidence="1">Isopentenyl-diphosphate:tRNA isopentenyltransferase</fullName>
        <shortName evidence="1">IPP transferase</shortName>
        <shortName evidence="1">IPPT</shortName>
        <shortName evidence="1">IPTase</shortName>
    </alternativeName>
</protein>
<comment type="function">
    <text evidence="1">Catalyzes the transfer of a dimethylallyl group onto the adenine at position 37 in tRNAs that read codons beginning with uridine, leading to the formation of N6-(dimethylallyl)adenosine (i(6)A).</text>
</comment>
<comment type="catalytic activity">
    <reaction evidence="1">
        <text>adenosine(37) in tRNA + dimethylallyl diphosphate = N(6)-dimethylallyladenosine(37) in tRNA + diphosphate</text>
        <dbReference type="Rhea" id="RHEA:26482"/>
        <dbReference type="Rhea" id="RHEA-COMP:10162"/>
        <dbReference type="Rhea" id="RHEA-COMP:10375"/>
        <dbReference type="ChEBI" id="CHEBI:33019"/>
        <dbReference type="ChEBI" id="CHEBI:57623"/>
        <dbReference type="ChEBI" id="CHEBI:74411"/>
        <dbReference type="ChEBI" id="CHEBI:74415"/>
        <dbReference type="EC" id="2.5.1.75"/>
    </reaction>
</comment>
<comment type="cofactor">
    <cofactor evidence="1">
        <name>Mg(2+)</name>
        <dbReference type="ChEBI" id="CHEBI:18420"/>
    </cofactor>
</comment>
<comment type="subunit">
    <text evidence="1">Monomer.</text>
</comment>
<comment type="similarity">
    <text evidence="1">Belongs to the IPP transferase family.</text>
</comment>
<feature type="chain" id="PRO_0000377211" description="tRNA dimethylallyltransferase">
    <location>
        <begin position="1"/>
        <end position="306"/>
    </location>
</feature>
<feature type="region of interest" description="Interaction with substrate tRNA" evidence="1">
    <location>
        <begin position="27"/>
        <end position="30"/>
    </location>
</feature>
<feature type="region of interest" description="Interaction with substrate tRNA" evidence="1">
    <location>
        <begin position="152"/>
        <end position="156"/>
    </location>
</feature>
<feature type="binding site" evidence="1">
    <location>
        <begin position="2"/>
        <end position="9"/>
    </location>
    <ligand>
        <name>ATP</name>
        <dbReference type="ChEBI" id="CHEBI:30616"/>
    </ligand>
</feature>
<feature type="binding site" evidence="1">
    <location>
        <begin position="4"/>
        <end position="9"/>
    </location>
    <ligand>
        <name>substrate</name>
    </ligand>
</feature>
<feature type="site" description="Interaction with substrate tRNA" evidence="1">
    <location>
        <position position="93"/>
    </location>
</feature>